<feature type="chain" id="PRO_0000354266" description="Small ribosomal subunit protein uS15c">
    <location>
        <begin position="1"/>
        <end position="90"/>
    </location>
</feature>
<accession>A8Y9D2</accession>
<keyword id="KW-0150">Chloroplast</keyword>
<keyword id="KW-0934">Plastid</keyword>
<keyword id="KW-0687">Ribonucleoprotein</keyword>
<keyword id="KW-0689">Ribosomal protein</keyword>
<reference key="1">
    <citation type="journal article" date="2008" name="PLoS ONE">
        <title>An optimized chloroplast DNA extraction protocol for grasses (Poaceae) proves suitable for whole plastid genome sequencing and SNP detection.</title>
        <authorList>
            <person name="Diekmann K."/>
            <person name="Hodkinson T.R."/>
            <person name="Fricke E."/>
            <person name="Barth S."/>
        </authorList>
    </citation>
    <scope>NUCLEOTIDE SEQUENCE [LARGE SCALE GENOMIC DNA]</scope>
    <source>
        <strain>cv. Cashel</strain>
    </source>
</reference>
<geneLocation type="chloroplast"/>
<dbReference type="EMBL" id="AM777385">
    <property type="protein sequence ID" value="CAO86021.1"/>
    <property type="molecule type" value="Genomic_DNA"/>
</dbReference>
<dbReference type="EMBL" id="AM777385">
    <property type="protein sequence ID" value="CAO86033.1"/>
    <property type="molecule type" value="Genomic_DNA"/>
</dbReference>
<dbReference type="SMR" id="A8Y9D2"/>
<dbReference type="KEGG" id="lper:5696536"/>
<dbReference type="KEGG" id="lper:5696596"/>
<dbReference type="GO" id="GO:0009507">
    <property type="term" value="C:chloroplast"/>
    <property type="evidence" value="ECO:0007669"/>
    <property type="project" value="UniProtKB-SubCell"/>
</dbReference>
<dbReference type="GO" id="GO:1990904">
    <property type="term" value="C:ribonucleoprotein complex"/>
    <property type="evidence" value="ECO:0007669"/>
    <property type="project" value="UniProtKB-KW"/>
</dbReference>
<dbReference type="GO" id="GO:0005840">
    <property type="term" value="C:ribosome"/>
    <property type="evidence" value="ECO:0007669"/>
    <property type="project" value="UniProtKB-KW"/>
</dbReference>
<dbReference type="GO" id="GO:0003735">
    <property type="term" value="F:structural constituent of ribosome"/>
    <property type="evidence" value="ECO:0007669"/>
    <property type="project" value="InterPro"/>
</dbReference>
<dbReference type="GO" id="GO:0006412">
    <property type="term" value="P:translation"/>
    <property type="evidence" value="ECO:0007669"/>
    <property type="project" value="UniProtKB-UniRule"/>
</dbReference>
<dbReference type="CDD" id="cd00353">
    <property type="entry name" value="Ribosomal_S15p_S13e"/>
    <property type="match status" value="1"/>
</dbReference>
<dbReference type="Gene3D" id="1.10.287.10">
    <property type="entry name" value="S15/NS1, RNA-binding"/>
    <property type="match status" value="1"/>
</dbReference>
<dbReference type="HAMAP" id="MF_01343_B">
    <property type="entry name" value="Ribosomal_uS15_B"/>
    <property type="match status" value="1"/>
</dbReference>
<dbReference type="InterPro" id="IPR000589">
    <property type="entry name" value="Ribosomal_uS15"/>
</dbReference>
<dbReference type="InterPro" id="IPR005290">
    <property type="entry name" value="Ribosomal_uS15_bac-type"/>
</dbReference>
<dbReference type="InterPro" id="IPR009068">
    <property type="entry name" value="uS15_NS1_RNA-bd_sf"/>
</dbReference>
<dbReference type="NCBIfam" id="TIGR00952">
    <property type="entry name" value="S15_bact"/>
    <property type="match status" value="1"/>
</dbReference>
<dbReference type="PANTHER" id="PTHR23321">
    <property type="entry name" value="RIBOSOMAL PROTEIN S15, BACTERIAL AND ORGANELLAR"/>
    <property type="match status" value="1"/>
</dbReference>
<dbReference type="PANTHER" id="PTHR23321:SF26">
    <property type="entry name" value="SMALL RIBOSOMAL SUBUNIT PROTEIN US15M"/>
    <property type="match status" value="1"/>
</dbReference>
<dbReference type="Pfam" id="PF00312">
    <property type="entry name" value="Ribosomal_S15"/>
    <property type="match status" value="1"/>
</dbReference>
<dbReference type="SMART" id="SM01387">
    <property type="entry name" value="Ribosomal_S15"/>
    <property type="match status" value="1"/>
</dbReference>
<dbReference type="SUPFAM" id="SSF47060">
    <property type="entry name" value="S15/NS1 RNA-binding domain"/>
    <property type="match status" value="1"/>
</dbReference>
<dbReference type="PROSITE" id="PS00362">
    <property type="entry name" value="RIBOSOMAL_S15"/>
    <property type="match status" value="1"/>
</dbReference>
<organism>
    <name type="scientific">Lolium perenne</name>
    <name type="common">Perennial ryegrass</name>
    <dbReference type="NCBI Taxonomy" id="4522"/>
    <lineage>
        <taxon>Eukaryota</taxon>
        <taxon>Viridiplantae</taxon>
        <taxon>Streptophyta</taxon>
        <taxon>Embryophyta</taxon>
        <taxon>Tracheophyta</taxon>
        <taxon>Spermatophyta</taxon>
        <taxon>Magnoliopsida</taxon>
        <taxon>Liliopsida</taxon>
        <taxon>Poales</taxon>
        <taxon>Poaceae</taxon>
        <taxon>BOP clade</taxon>
        <taxon>Pooideae</taxon>
        <taxon>Poodae</taxon>
        <taxon>Poeae</taxon>
        <taxon>Poeae Chloroplast Group 2 (Poeae type)</taxon>
        <taxon>Loliodinae</taxon>
        <taxon>Loliinae</taxon>
        <taxon>Lolium</taxon>
    </lineage>
</organism>
<protein>
    <recommendedName>
        <fullName evidence="2">Small ribosomal subunit protein uS15c</fullName>
    </recommendedName>
    <alternativeName>
        <fullName>30S ribosomal protein S15, chloroplastic</fullName>
    </alternativeName>
</protein>
<name>RR15_LOLPR</name>
<proteinExistence type="inferred from homology"/>
<gene>
    <name type="primary">rps15-A</name>
    <name type="ordered locus">LopeCp100</name>
</gene>
<gene>
    <name type="primary">rps15-B</name>
    <name type="ordered locus">LopeCp113</name>
</gene>
<evidence type="ECO:0000250" key="1"/>
<evidence type="ECO:0000305" key="2"/>
<sequence length="90" mass="10774">MKKKGGRKILGFMVKEEKEENRGSVEFQVFSFTNKIRRLASHLELHKKDFSSERGLRILLGKRRRLLAYLAKKNRVRYKKLISQLNIREQ</sequence>
<comment type="subunit">
    <text evidence="1">Part of the 30S ribosomal subunit.</text>
</comment>
<comment type="subcellular location">
    <subcellularLocation>
        <location>Plastid</location>
        <location>Chloroplast</location>
    </subcellularLocation>
</comment>
<comment type="similarity">
    <text evidence="2">Belongs to the universal ribosomal protein uS15 family.</text>
</comment>